<feature type="chain" id="PRO_0000186683" description="Ascorbate-specific PTS system EIIA component">
    <location>
        <begin position="1"/>
        <end position="154"/>
    </location>
</feature>
<feature type="domain" description="PTS EIIA type-2" evidence="1">
    <location>
        <begin position="6"/>
        <end position="150"/>
    </location>
</feature>
<feature type="active site" description="Tele-phosphohistidine intermediate" evidence="1">
    <location>
        <position position="68"/>
    </location>
</feature>
<feature type="modified residue" description="Phosphohistidine" evidence="7">
    <location>
        <position position="68"/>
    </location>
</feature>
<feature type="sequence conflict" description="In Ref. 1; AAA97091." evidence="7" ref="1">
    <original>AA</original>
    <variation>GSLRRN</variation>
    <location>
        <begin position="153"/>
        <end position="154"/>
    </location>
</feature>
<dbReference type="EMBL" id="U14003">
    <property type="protein sequence ID" value="AAA97091.1"/>
    <property type="molecule type" value="Genomic_DNA"/>
</dbReference>
<dbReference type="EMBL" id="U00096">
    <property type="protein sequence ID" value="AAC77152.1"/>
    <property type="molecule type" value="Genomic_DNA"/>
</dbReference>
<dbReference type="EMBL" id="AP009048">
    <property type="protein sequence ID" value="BAE78196.1"/>
    <property type="molecule type" value="Genomic_DNA"/>
</dbReference>
<dbReference type="PIR" id="F65230">
    <property type="entry name" value="F65230"/>
</dbReference>
<dbReference type="RefSeq" id="NP_418616.1">
    <property type="nucleotide sequence ID" value="NC_000913.3"/>
</dbReference>
<dbReference type="RefSeq" id="WP_000776517.1">
    <property type="nucleotide sequence ID" value="NZ_LN832404.1"/>
</dbReference>
<dbReference type="SMR" id="P69820"/>
<dbReference type="BioGRID" id="4262708">
    <property type="interactions" value="10"/>
</dbReference>
<dbReference type="ComplexPortal" id="CPX-5967">
    <property type="entry name" value="L-ascorbate-specific enzyme II complex"/>
</dbReference>
<dbReference type="FunCoup" id="P69820">
    <property type="interactions" value="75"/>
</dbReference>
<dbReference type="IntAct" id="P69820">
    <property type="interactions" value="1"/>
</dbReference>
<dbReference type="STRING" id="511145.b4195"/>
<dbReference type="TCDB" id="4.A.7.1.1">
    <property type="family name" value="the pts l-ascorbate (l-asc) family"/>
</dbReference>
<dbReference type="PaxDb" id="511145-b4195"/>
<dbReference type="EnsemblBacteria" id="AAC77152">
    <property type="protein sequence ID" value="AAC77152"/>
    <property type="gene ID" value="b4195"/>
</dbReference>
<dbReference type="GeneID" id="948715"/>
<dbReference type="KEGG" id="ecj:JW4153"/>
<dbReference type="KEGG" id="eco:b4195"/>
<dbReference type="KEGG" id="ecoc:C3026_22660"/>
<dbReference type="PATRIC" id="fig|1411691.4.peg.2506"/>
<dbReference type="EchoBASE" id="EB2388"/>
<dbReference type="eggNOG" id="COG1762">
    <property type="taxonomic scope" value="Bacteria"/>
</dbReference>
<dbReference type="HOGENOM" id="CLU_072531_2_0_6"/>
<dbReference type="InParanoid" id="P69820"/>
<dbReference type="OMA" id="MGPYIIL"/>
<dbReference type="OrthoDB" id="1634238at2"/>
<dbReference type="PhylomeDB" id="P69820"/>
<dbReference type="BioCyc" id="EcoCyc:YJFU-MONOMER"/>
<dbReference type="BioCyc" id="MetaCyc:YJFU-MONOMER"/>
<dbReference type="PRO" id="PR:P69820"/>
<dbReference type="Proteomes" id="UP000000625">
    <property type="component" value="Chromosome"/>
</dbReference>
<dbReference type="GO" id="GO:0005737">
    <property type="term" value="C:cytoplasm"/>
    <property type="evidence" value="ECO:0007669"/>
    <property type="project" value="UniProtKB-SubCell"/>
</dbReference>
<dbReference type="GO" id="GO:1902495">
    <property type="term" value="C:transmembrane transporter complex"/>
    <property type="evidence" value="ECO:0000303"/>
    <property type="project" value="ComplexPortal"/>
</dbReference>
<dbReference type="GO" id="GO:0016301">
    <property type="term" value="F:kinase activity"/>
    <property type="evidence" value="ECO:0007669"/>
    <property type="project" value="UniProtKB-KW"/>
</dbReference>
<dbReference type="GO" id="GO:0090585">
    <property type="term" value="F:protein-phosphocysteine-L-ascorbate-phosphotransferase system transporter activity"/>
    <property type="evidence" value="ECO:0000315"/>
    <property type="project" value="EcoCyc"/>
</dbReference>
<dbReference type="GO" id="GO:0015882">
    <property type="term" value="P:L-ascorbic acid transmembrane transport"/>
    <property type="evidence" value="ECO:0000315"/>
    <property type="project" value="EcoCyc"/>
</dbReference>
<dbReference type="GO" id="GO:0009401">
    <property type="term" value="P:phosphoenolpyruvate-dependent sugar phosphotransferase system"/>
    <property type="evidence" value="ECO:0000314"/>
    <property type="project" value="EcoCyc"/>
</dbReference>
<dbReference type="CDD" id="cd00211">
    <property type="entry name" value="PTS_IIA_fru"/>
    <property type="match status" value="1"/>
</dbReference>
<dbReference type="FunFam" id="3.40.930.10:FF:000005">
    <property type="entry name" value="Ascorbate-specific phosphotransferase enzyme IIA component"/>
    <property type="match status" value="1"/>
</dbReference>
<dbReference type="Gene3D" id="3.40.930.10">
    <property type="entry name" value="Mannitol-specific EII, Chain A"/>
    <property type="match status" value="1"/>
</dbReference>
<dbReference type="InterPro" id="IPR051351">
    <property type="entry name" value="Ascorbate-PTS_EIIA_comp"/>
</dbReference>
<dbReference type="InterPro" id="IPR016152">
    <property type="entry name" value="PTrfase/Anion_transptr"/>
</dbReference>
<dbReference type="InterPro" id="IPR002178">
    <property type="entry name" value="PTS_EIIA_type-2_dom"/>
</dbReference>
<dbReference type="NCBIfam" id="NF007694">
    <property type="entry name" value="PRK10372.1"/>
    <property type="match status" value="1"/>
</dbReference>
<dbReference type="PANTHER" id="PTHR36203">
    <property type="entry name" value="ASCORBATE-SPECIFIC PTS SYSTEM EIIA COMPONENT"/>
    <property type="match status" value="1"/>
</dbReference>
<dbReference type="PANTHER" id="PTHR36203:SF1">
    <property type="entry name" value="ASCORBATE-SPECIFIC PTS SYSTEM EIIA COMPONENT"/>
    <property type="match status" value="1"/>
</dbReference>
<dbReference type="Pfam" id="PF00359">
    <property type="entry name" value="PTS_EIIA_2"/>
    <property type="match status" value="1"/>
</dbReference>
<dbReference type="SUPFAM" id="SSF55804">
    <property type="entry name" value="Phoshotransferase/anion transport protein"/>
    <property type="match status" value="1"/>
</dbReference>
<dbReference type="PROSITE" id="PS51094">
    <property type="entry name" value="PTS_EIIA_TYPE_2"/>
    <property type="match status" value="1"/>
</dbReference>
<dbReference type="PROSITE" id="PS00372">
    <property type="entry name" value="PTS_EIIA_TYPE_2_HIS"/>
    <property type="match status" value="1"/>
</dbReference>
<reference key="1">
    <citation type="journal article" date="1995" name="Nucleic Acids Res.">
        <title>Analysis of the Escherichia coli genome VI: DNA sequence of the region from 92.8 through 100 minutes.</title>
        <authorList>
            <person name="Burland V.D."/>
            <person name="Plunkett G. III"/>
            <person name="Sofia H.J."/>
            <person name="Daniels D.L."/>
            <person name="Blattner F.R."/>
        </authorList>
    </citation>
    <scope>NUCLEOTIDE SEQUENCE [LARGE SCALE GENOMIC DNA]</scope>
    <source>
        <strain>K12 / MG1655 / ATCC 47076</strain>
    </source>
</reference>
<reference key="2">
    <citation type="journal article" date="1997" name="Science">
        <title>The complete genome sequence of Escherichia coli K-12.</title>
        <authorList>
            <person name="Blattner F.R."/>
            <person name="Plunkett G. III"/>
            <person name="Bloch C.A."/>
            <person name="Perna N.T."/>
            <person name="Burland V."/>
            <person name="Riley M."/>
            <person name="Collado-Vides J."/>
            <person name="Glasner J.D."/>
            <person name="Rode C.K."/>
            <person name="Mayhew G.F."/>
            <person name="Gregor J."/>
            <person name="Davis N.W."/>
            <person name="Kirkpatrick H.A."/>
            <person name="Goeden M.A."/>
            <person name="Rose D.J."/>
            <person name="Mau B."/>
            <person name="Shao Y."/>
        </authorList>
    </citation>
    <scope>NUCLEOTIDE SEQUENCE [LARGE SCALE GENOMIC DNA]</scope>
    <scope>SEQUENCE REVISION TO C-TERMINUS</scope>
    <source>
        <strain>K12 / MG1655 / ATCC 47076</strain>
    </source>
</reference>
<reference key="3">
    <citation type="journal article" date="2006" name="Mol. Syst. Biol.">
        <title>Highly accurate genome sequences of Escherichia coli K-12 strains MG1655 and W3110.</title>
        <authorList>
            <person name="Hayashi K."/>
            <person name="Morooka N."/>
            <person name="Yamamoto Y."/>
            <person name="Fujita K."/>
            <person name="Isono K."/>
            <person name="Choi S."/>
            <person name="Ohtsubo E."/>
            <person name="Baba T."/>
            <person name="Wanner B.L."/>
            <person name="Mori H."/>
            <person name="Horiuchi T."/>
        </authorList>
    </citation>
    <scope>NUCLEOTIDE SEQUENCE [LARGE SCALE GENOMIC DNA]</scope>
    <source>
        <strain>K12 / W3110 / ATCC 27325 / DSM 5911</strain>
    </source>
</reference>
<reference key="4">
    <citation type="journal article" date="1996" name="Genome Sci. Technol.">
        <title>Novel phosphotransferases system genes revealed by bacterial genome analysis: operons encoding homologues of sugar-specific permease domains of the phosphotransferase system and pentose catabolic enzymes.</title>
        <authorList>
            <person name="Reizer J."/>
            <person name="Charbit A."/>
            <person name="Reizer A."/>
            <person name="Saier M.H. Jr."/>
        </authorList>
    </citation>
    <scope>DISCUSSION OF SEQUENCE</scope>
</reference>
<reference key="5">
    <citation type="journal article" date="2002" name="J. Bacteriol.">
        <title>The gene yjfQ encodes the repressor of the yjfR-X regulon (ula), which is involved in L-ascorbate metabolism in Escherichia coli.</title>
        <authorList>
            <person name="Campos E."/>
            <person name="Aguilar J."/>
            <person name="Baldoma L."/>
            <person name="Badia J."/>
        </authorList>
    </citation>
    <scope>TRANSCRIPTIONAL REGULATION</scope>
</reference>
<reference key="6">
    <citation type="journal article" date="2002" name="J. Bacteriol.">
        <title>Utilization of L-ascorbate by Escherichia coli K-12: assignments of functions to products of the yjf-sga and yia-sgb operons.</title>
        <authorList>
            <person name="Yew W.S."/>
            <person name="Gerlt J.A."/>
        </authorList>
    </citation>
    <scope>FUNCTION</scope>
    <scope>GENE NAME</scope>
</reference>
<reference key="7">
    <citation type="journal article" date="2003" name="J. Bacteriol.">
        <title>The ascorbate transporter of Escherichia coli.</title>
        <authorList>
            <person name="Zhang Z."/>
            <person name="Aboulwafa M."/>
            <person name="Smith M.H."/>
            <person name="Saier M.H. Jr."/>
        </authorList>
    </citation>
    <scope>FUNCTION</scope>
    <scope>CATALYTIC ACTIVITY</scope>
    <scope>DISRUPTION PHENOTYPE</scope>
    <scope>INDUCTION</scope>
</reference>
<reference key="8">
    <citation type="journal article" date="2004" name="J. Bacteriol.">
        <title>Regulation of expression of the divergent ulaG and ulaABCDEF operons involved in L-ascorbate dissimilation in Escherichia coli.</title>
        <authorList>
            <person name="Campos E."/>
            <person name="Baldoma L."/>
            <person name="Aguilar J."/>
            <person name="Badia J."/>
        </authorList>
    </citation>
    <scope>TRANSCRIPTIONAL REGULATION</scope>
</reference>
<evidence type="ECO:0000255" key="1">
    <source>
        <dbReference type="PROSITE-ProRule" id="PRU00417"/>
    </source>
</evidence>
<evidence type="ECO:0000269" key="2">
    <source>
    </source>
</evidence>
<evidence type="ECO:0000269" key="3">
    <source>
    </source>
</evidence>
<evidence type="ECO:0000269" key="4">
    <source>
    </source>
</evidence>
<evidence type="ECO:0000303" key="5">
    <source>
    </source>
</evidence>
<evidence type="ECO:0000303" key="6">
    <source>
    </source>
</evidence>
<evidence type="ECO:0000305" key="7"/>
<evidence type="ECO:0000305" key="8">
    <source>
    </source>
</evidence>
<keyword id="KW-0963">Cytoplasm</keyword>
<keyword id="KW-0418">Kinase</keyword>
<keyword id="KW-0597">Phosphoprotein</keyword>
<keyword id="KW-0598">Phosphotransferase system</keyword>
<keyword id="KW-1185">Reference proteome</keyword>
<keyword id="KW-0808">Transferase</keyword>
<keyword id="KW-0813">Transport</keyword>
<organism>
    <name type="scientific">Escherichia coli (strain K12)</name>
    <dbReference type="NCBI Taxonomy" id="83333"/>
    <lineage>
        <taxon>Bacteria</taxon>
        <taxon>Pseudomonadati</taxon>
        <taxon>Pseudomonadota</taxon>
        <taxon>Gammaproteobacteria</taxon>
        <taxon>Enterobacterales</taxon>
        <taxon>Enterobacteriaceae</taxon>
        <taxon>Escherichia</taxon>
    </lineage>
</organism>
<accession>P69820</accession>
<accession>P39303</accession>
<accession>Q2M6B0</accession>
<proteinExistence type="evidence at protein level"/>
<comment type="function">
    <text evidence="3 8">The phosphoenolpyruvate-dependent sugar phosphotransferase system (sugar PTS), a major carbohydrate active transport system, catalyzes the phosphorylation of incoming sugar substrates concomitantly with their translocation across the cell membrane. The enzyme II UlaABC PTS system is involved in ascorbate transport.</text>
</comment>
<comment type="subcellular location">
    <subcellularLocation>
        <location evidence="7">Cytoplasm</location>
    </subcellularLocation>
</comment>
<comment type="induction">
    <text evidence="2 3 4">Induced by L-ascorbate. Repressed by UlaR.</text>
</comment>
<comment type="domain">
    <text evidence="1">The PTS EIIA type-2 domain is phosphorylated by phospho-HPr on a histidyl residue. Then, it transfers the phosphoryl group to the PTS EIIB type-2 domain.</text>
</comment>
<comment type="disruption phenotype">
    <text evidence="3">Cells lacking this gene are unable to use L-ascorbate.</text>
</comment>
<sequence length="154" mass="17238">MKLRDSLAENKSIRLQAEAETWQEAVKIGVDLLVAADVVEPRYYQAILDGVEQFGPYFVIAPGLAMPHGRPEEGVKKTGFSLVTLKKPLEFNHDDNDPVDILITMAAVDANTHQEVGIMQIVNLFEDEENFDRLRACRTEQEVLDLIDRTNAAA</sequence>
<protein>
    <recommendedName>
        <fullName evidence="6">Ascorbate-specific PTS system EIIA component</fullName>
    </recommendedName>
    <alternativeName>
        <fullName evidence="6">Ascorbate-specific phosphotransferase enzyme IIA component</fullName>
    </alternativeName>
</protein>
<name>ULAC_ECOLI</name>
<gene>
    <name evidence="5" type="primary">ulaC</name>
    <name type="synonym">ptxA</name>
    <name type="synonym">sgaA</name>
    <name type="synonym">yjfU</name>
    <name type="ordered locus">b4195</name>
    <name type="ordered locus">JW4153</name>
</gene>